<reference key="1">
    <citation type="journal article" date="1999" name="Plant Physiol.">
        <title>Cloning of nicotianamine synthase genes, novel genes involved in the biosynthesis of phytosiderophores.</title>
        <authorList>
            <person name="Higuchi K."/>
            <person name="Suzuki K."/>
            <person name="Nakanishi H."/>
            <person name="Yamaguchi H."/>
            <person name="Nishizawa N.-K."/>
            <person name="Mori S."/>
        </authorList>
    </citation>
    <scope>NUCLEOTIDE SEQUENCE [MRNA]</scope>
    <source>
        <strain>cv. Ehimehadaka No.1</strain>
        <tissue>Root</tissue>
    </source>
</reference>
<keyword id="KW-0949">S-adenosyl-L-methionine</keyword>
<keyword id="KW-0808">Transferase</keyword>
<sequence>MAAQNNQEVDALVEKITGLHAAIAKLPSLSPSPDVDALFTELVTACVPPSPVDVTKLGPEAQEMREGLIRLCSEAEGKLEAHYSDMLAAFDKPLDHLGMFPYYNNYINLSKLEYELLARYVPGGYRPARVAFIGSGPLPFSSFVLAARHLPDTMFDNYDLCGAANDRASKLFRADRDVGARMSFHTADVADLAGELAKYDVVFLAALVGMAAEDKAKVIAHLGAHMADGAALVVRSAHGARGFLYPIVDPQDIGRGGFEVLAVCHPDDDVVNSVIIAQKSKDVHADGLGSGRGAGGQYARGTVPVVSPPCRFGEMVADVTQNHKRDEFANAEVAF</sequence>
<proteinExistence type="evidence at transcript level"/>
<name>NAS2_HORVU</name>
<protein>
    <recommendedName>
        <fullName>Probable nicotianamine synthase 2</fullName>
        <ecNumber>2.5.1.43</ecNumber>
    </recommendedName>
    <alternativeName>
        <fullName>HvNAS2</fullName>
    </alternativeName>
    <alternativeName>
        <fullName>S-adenosyl-L-methionine:S-adenosyl-L-methionine:S-adenosyl-methionine 3-amino-3-carboxypropyltransferase 2</fullName>
    </alternativeName>
</protein>
<dbReference type="EC" id="2.5.1.43"/>
<dbReference type="EMBL" id="AB011265">
    <property type="protein sequence ID" value="BAA74582.1"/>
    <property type="molecule type" value="mRNA"/>
</dbReference>
<dbReference type="SMR" id="Q9ZQV7"/>
<dbReference type="BRENDA" id="2.5.1.43">
    <property type="organism ID" value="2687"/>
</dbReference>
<dbReference type="GO" id="GO:0030410">
    <property type="term" value="F:nicotianamine synthase activity"/>
    <property type="evidence" value="ECO:0007669"/>
    <property type="project" value="UniProtKB-EC"/>
</dbReference>
<dbReference type="GO" id="GO:0030418">
    <property type="term" value="P:nicotianamine biosynthetic process"/>
    <property type="evidence" value="ECO:0007669"/>
    <property type="project" value="InterPro"/>
</dbReference>
<dbReference type="Gene3D" id="3.40.50.150">
    <property type="entry name" value="Vaccinia Virus protein VP39"/>
    <property type="match status" value="1"/>
</dbReference>
<dbReference type="InterPro" id="IPR004298">
    <property type="entry name" value="Nicotian_synth"/>
</dbReference>
<dbReference type="InterPro" id="IPR029063">
    <property type="entry name" value="SAM-dependent_MTases_sf"/>
</dbReference>
<dbReference type="PANTHER" id="PTHR32266:SF29">
    <property type="entry name" value="NICOTIANAMINE SYNTHASE"/>
    <property type="match status" value="1"/>
</dbReference>
<dbReference type="PANTHER" id="PTHR32266">
    <property type="entry name" value="NICOTIANAMINE SYNTHASE 3"/>
    <property type="match status" value="1"/>
</dbReference>
<dbReference type="Pfam" id="PF03059">
    <property type="entry name" value="NAS"/>
    <property type="match status" value="1"/>
</dbReference>
<dbReference type="SUPFAM" id="SSF53335">
    <property type="entry name" value="S-adenosyl-L-methionine-dependent methyltransferases"/>
    <property type="match status" value="1"/>
</dbReference>
<dbReference type="PROSITE" id="PS51142">
    <property type="entry name" value="NAS"/>
    <property type="match status" value="1"/>
</dbReference>
<accession>Q9ZQV7</accession>
<gene>
    <name type="primary">NAS2</name>
</gene>
<feature type="chain" id="PRO_0000212705" description="Probable nicotianamine synthase 2">
    <location>
        <begin position="1"/>
        <end position="335"/>
    </location>
</feature>
<organism>
    <name type="scientific">Hordeum vulgare</name>
    <name type="common">Barley</name>
    <dbReference type="NCBI Taxonomy" id="4513"/>
    <lineage>
        <taxon>Eukaryota</taxon>
        <taxon>Viridiplantae</taxon>
        <taxon>Streptophyta</taxon>
        <taxon>Embryophyta</taxon>
        <taxon>Tracheophyta</taxon>
        <taxon>Spermatophyta</taxon>
        <taxon>Magnoliopsida</taxon>
        <taxon>Liliopsida</taxon>
        <taxon>Poales</taxon>
        <taxon>Poaceae</taxon>
        <taxon>BOP clade</taxon>
        <taxon>Pooideae</taxon>
        <taxon>Triticodae</taxon>
        <taxon>Triticeae</taxon>
        <taxon>Hordeinae</taxon>
        <taxon>Hordeum</taxon>
    </lineage>
</organism>
<comment type="function">
    <text evidence="1">Synthesizes nicotianamine, a polyamine that is the first intermediate in the synthesis of the phytosiderophores of the mugineic acid type found in gramineae which serves as a sensor for the physiological iron status within the plant, and/or might be involved in the transport of iron.</text>
</comment>
<comment type="catalytic activity">
    <reaction>
        <text>3 S-adenosyl-L-methionine = nicotianamine + 3 S-methyl-5'-thioadenosine + 3 H(+)</text>
        <dbReference type="Rhea" id="RHEA:16481"/>
        <dbReference type="ChEBI" id="CHEBI:15378"/>
        <dbReference type="ChEBI" id="CHEBI:17509"/>
        <dbReference type="ChEBI" id="CHEBI:58249"/>
        <dbReference type="ChEBI" id="CHEBI:59789"/>
        <dbReference type="EC" id="2.5.1.43"/>
    </reaction>
</comment>
<comment type="similarity">
    <text evidence="2">Belongs to the nicotianamine synthase (NAS)-like family.</text>
</comment>
<evidence type="ECO:0000250" key="1"/>
<evidence type="ECO:0000305" key="2"/>